<evidence type="ECO:0000255" key="1"/>
<evidence type="ECO:0000255" key="2">
    <source>
        <dbReference type="PROSITE-ProRule" id="PRU00214"/>
    </source>
</evidence>
<evidence type="ECO:0000269" key="3">
    <source>
    </source>
</evidence>
<evidence type="ECO:0000305" key="4"/>
<gene>
    <name type="primary">MUB6</name>
    <name type="ordered locus">At1g22050</name>
    <name type="ORF">F2E2.12</name>
    <name type="ORF">F2E2_11</name>
</gene>
<organism>
    <name type="scientific">Arabidopsis thaliana</name>
    <name type="common">Mouse-ear cress</name>
    <dbReference type="NCBI Taxonomy" id="3702"/>
    <lineage>
        <taxon>Eukaryota</taxon>
        <taxon>Viridiplantae</taxon>
        <taxon>Streptophyta</taxon>
        <taxon>Embryophyta</taxon>
        <taxon>Tracheophyta</taxon>
        <taxon>Spermatophyta</taxon>
        <taxon>Magnoliopsida</taxon>
        <taxon>eudicotyledons</taxon>
        <taxon>Gunneridae</taxon>
        <taxon>Pentapetalae</taxon>
        <taxon>rosids</taxon>
        <taxon>malvids</taxon>
        <taxon>Brassicales</taxon>
        <taxon>Brassicaceae</taxon>
        <taxon>Camelineae</taxon>
        <taxon>Arabidopsis</taxon>
    </lineage>
</organism>
<comment type="function">
    <text>May serve as docking site to facilitate the association of other proteins to the plasma membrane.</text>
</comment>
<comment type="subcellular location">
    <subcellularLocation>
        <location evidence="3">Cell membrane</location>
        <topology evidence="3">Lipid-anchor</topology>
    </subcellularLocation>
</comment>
<comment type="tissue specificity">
    <text evidence="3">Ubiquitous.</text>
</comment>
<comment type="induction">
    <text evidence="3">Not induced by pathogens, cycloheximide and ozone treatment.</text>
</comment>
<comment type="miscellaneous">
    <text>Heat stable and remains soluble at temperatures exceeding 90 degrees Celsius.</text>
</comment>
<comment type="sequence caution" evidence="4">
    <conflict type="erroneous gene model prediction">
        <sequence resource="EMBL-CDS" id="AAF86549"/>
    </conflict>
</comment>
<sequence length="119" mass="13510">MAGEEDWIELKFRLADGTDIGPSKYNQSMTVSSLKEKLISQWPKDKENTPKTVNDMKLINAGKILENNRTLAESRLPVCELPGMIITMHIVLRLPTLDKKSEKLQNDPPMKNRCVCTIL</sequence>
<dbReference type="EMBL" id="AC069252">
    <property type="protein sequence ID" value="AAF86549.1"/>
    <property type="status" value="ALT_SEQ"/>
    <property type="molecule type" value="Genomic_DNA"/>
</dbReference>
<dbReference type="EMBL" id="CP002684">
    <property type="protein sequence ID" value="AEE30189.1"/>
    <property type="molecule type" value="Genomic_DNA"/>
</dbReference>
<dbReference type="EMBL" id="AK118802">
    <property type="protein sequence ID" value="BAC43392.1"/>
    <property type="molecule type" value="mRNA"/>
</dbReference>
<dbReference type="EMBL" id="BT005453">
    <property type="protein sequence ID" value="AAO63873.1"/>
    <property type="molecule type" value="mRNA"/>
</dbReference>
<dbReference type="PIR" id="E86353">
    <property type="entry name" value="E86353"/>
</dbReference>
<dbReference type="RefSeq" id="NP_173624.1">
    <property type="nucleotide sequence ID" value="NM_102055.3"/>
</dbReference>
<dbReference type="SMR" id="Q8GWJ6"/>
<dbReference type="BioGRID" id="24049">
    <property type="interactions" value="6"/>
</dbReference>
<dbReference type="FunCoup" id="Q8GWJ6">
    <property type="interactions" value="5"/>
</dbReference>
<dbReference type="IntAct" id="Q8GWJ6">
    <property type="interactions" value="1"/>
</dbReference>
<dbReference type="STRING" id="3702.Q8GWJ6"/>
<dbReference type="PaxDb" id="3702-AT1G22050.1"/>
<dbReference type="ProteomicsDB" id="250742"/>
<dbReference type="DNASU" id="838810"/>
<dbReference type="EnsemblPlants" id="AT1G22050.1">
    <property type="protein sequence ID" value="AT1G22050.1"/>
    <property type="gene ID" value="AT1G22050"/>
</dbReference>
<dbReference type="GeneID" id="838810"/>
<dbReference type="Gramene" id="AT1G22050.1">
    <property type="protein sequence ID" value="AT1G22050.1"/>
    <property type="gene ID" value="AT1G22050"/>
</dbReference>
<dbReference type="KEGG" id="ath:AT1G22050"/>
<dbReference type="Araport" id="AT1G22050"/>
<dbReference type="TAIR" id="AT1G22050">
    <property type="gene designation" value="MUB6"/>
</dbReference>
<dbReference type="eggNOG" id="ENOG502S2V5">
    <property type="taxonomic scope" value="Eukaryota"/>
</dbReference>
<dbReference type="HOGENOM" id="CLU_136465_1_0_1"/>
<dbReference type="InParanoid" id="Q8GWJ6"/>
<dbReference type="OMA" id="RCVCTIL"/>
<dbReference type="OrthoDB" id="1043111at2759"/>
<dbReference type="PhylomeDB" id="Q8GWJ6"/>
<dbReference type="PRO" id="PR:Q8GWJ6"/>
<dbReference type="Proteomes" id="UP000006548">
    <property type="component" value="Chromosome 1"/>
</dbReference>
<dbReference type="ExpressionAtlas" id="Q8GWJ6">
    <property type="expression patterns" value="baseline and differential"/>
</dbReference>
<dbReference type="GO" id="GO:0005886">
    <property type="term" value="C:plasma membrane"/>
    <property type="evidence" value="ECO:0007669"/>
    <property type="project" value="UniProtKB-SubCell"/>
</dbReference>
<dbReference type="CDD" id="cd01814">
    <property type="entry name" value="Ubl_MUBs_plant"/>
    <property type="match status" value="1"/>
</dbReference>
<dbReference type="Gene3D" id="3.10.20.90">
    <property type="entry name" value="Phosphatidylinositol 3-kinase Catalytic Subunit, Chain A, domain 1"/>
    <property type="match status" value="1"/>
</dbReference>
<dbReference type="InterPro" id="IPR017000">
    <property type="entry name" value="MUB"/>
</dbReference>
<dbReference type="InterPro" id="IPR000626">
    <property type="entry name" value="Ubiquitin-like_dom"/>
</dbReference>
<dbReference type="InterPro" id="IPR029071">
    <property type="entry name" value="Ubiquitin-like_domsf"/>
</dbReference>
<dbReference type="InterPro" id="IPR040015">
    <property type="entry name" value="UBL3-like"/>
</dbReference>
<dbReference type="InterPro" id="IPR039540">
    <property type="entry name" value="UBL3-like_ubiquitin_dom"/>
</dbReference>
<dbReference type="PANTHER" id="PTHR13169:SF0">
    <property type="entry name" value="UBIQUITIN-LIKE PROTEIN 3"/>
    <property type="match status" value="1"/>
</dbReference>
<dbReference type="PANTHER" id="PTHR13169">
    <property type="entry name" value="UBIQUITIN-LIKE PROTEIN 3 HCG-1 PROTEIN"/>
    <property type="match status" value="1"/>
</dbReference>
<dbReference type="Pfam" id="PF13881">
    <property type="entry name" value="Rad60-SLD_2"/>
    <property type="match status" value="1"/>
</dbReference>
<dbReference type="PIRSF" id="PIRSF032572">
    <property type="entry name" value="MUB"/>
    <property type="match status" value="1"/>
</dbReference>
<dbReference type="SUPFAM" id="SSF54236">
    <property type="entry name" value="Ubiquitin-like"/>
    <property type="match status" value="1"/>
</dbReference>
<dbReference type="PROSITE" id="PS50053">
    <property type="entry name" value="UBIQUITIN_2"/>
    <property type="match status" value="1"/>
</dbReference>
<proteinExistence type="evidence at protein level"/>
<accession>Q8GWJ6</accession>
<accession>Q9LM54</accession>
<reference key="1">
    <citation type="journal article" date="2000" name="Nature">
        <title>Sequence and analysis of chromosome 1 of the plant Arabidopsis thaliana.</title>
        <authorList>
            <person name="Theologis A."/>
            <person name="Ecker J.R."/>
            <person name="Palm C.J."/>
            <person name="Federspiel N.A."/>
            <person name="Kaul S."/>
            <person name="White O."/>
            <person name="Alonso J."/>
            <person name="Altafi H."/>
            <person name="Araujo R."/>
            <person name="Bowman C.L."/>
            <person name="Brooks S.Y."/>
            <person name="Buehler E."/>
            <person name="Chan A."/>
            <person name="Chao Q."/>
            <person name="Chen H."/>
            <person name="Cheuk R.F."/>
            <person name="Chin C.W."/>
            <person name="Chung M.K."/>
            <person name="Conn L."/>
            <person name="Conway A.B."/>
            <person name="Conway A.R."/>
            <person name="Creasy T.H."/>
            <person name="Dewar K."/>
            <person name="Dunn P."/>
            <person name="Etgu P."/>
            <person name="Feldblyum T.V."/>
            <person name="Feng J.-D."/>
            <person name="Fong B."/>
            <person name="Fujii C.Y."/>
            <person name="Gill J.E."/>
            <person name="Goldsmith A.D."/>
            <person name="Haas B."/>
            <person name="Hansen N.F."/>
            <person name="Hughes B."/>
            <person name="Huizar L."/>
            <person name="Hunter J.L."/>
            <person name="Jenkins J."/>
            <person name="Johnson-Hopson C."/>
            <person name="Khan S."/>
            <person name="Khaykin E."/>
            <person name="Kim C.J."/>
            <person name="Koo H.L."/>
            <person name="Kremenetskaia I."/>
            <person name="Kurtz D.B."/>
            <person name="Kwan A."/>
            <person name="Lam B."/>
            <person name="Langin-Hooper S."/>
            <person name="Lee A."/>
            <person name="Lee J.M."/>
            <person name="Lenz C.A."/>
            <person name="Li J.H."/>
            <person name="Li Y.-P."/>
            <person name="Lin X."/>
            <person name="Liu S.X."/>
            <person name="Liu Z.A."/>
            <person name="Luros J.S."/>
            <person name="Maiti R."/>
            <person name="Marziali A."/>
            <person name="Militscher J."/>
            <person name="Miranda M."/>
            <person name="Nguyen M."/>
            <person name="Nierman W.C."/>
            <person name="Osborne B.I."/>
            <person name="Pai G."/>
            <person name="Peterson J."/>
            <person name="Pham P.K."/>
            <person name="Rizzo M."/>
            <person name="Rooney T."/>
            <person name="Rowley D."/>
            <person name="Sakano H."/>
            <person name="Salzberg S.L."/>
            <person name="Schwartz J.R."/>
            <person name="Shinn P."/>
            <person name="Southwick A.M."/>
            <person name="Sun H."/>
            <person name="Tallon L.J."/>
            <person name="Tambunga G."/>
            <person name="Toriumi M.J."/>
            <person name="Town C.D."/>
            <person name="Utterback T."/>
            <person name="Van Aken S."/>
            <person name="Vaysberg M."/>
            <person name="Vysotskaia V.S."/>
            <person name="Walker M."/>
            <person name="Wu D."/>
            <person name="Yu G."/>
            <person name="Fraser C.M."/>
            <person name="Venter J.C."/>
            <person name="Davis R.W."/>
        </authorList>
    </citation>
    <scope>NUCLEOTIDE SEQUENCE [LARGE SCALE GENOMIC DNA]</scope>
    <source>
        <strain>cv. Columbia</strain>
    </source>
</reference>
<reference key="2">
    <citation type="journal article" date="2017" name="Plant J.">
        <title>Araport11: a complete reannotation of the Arabidopsis thaliana reference genome.</title>
        <authorList>
            <person name="Cheng C.Y."/>
            <person name="Krishnakumar V."/>
            <person name="Chan A.P."/>
            <person name="Thibaud-Nissen F."/>
            <person name="Schobel S."/>
            <person name="Town C.D."/>
        </authorList>
    </citation>
    <scope>GENOME REANNOTATION</scope>
    <source>
        <strain>cv. Columbia</strain>
    </source>
</reference>
<reference key="3">
    <citation type="journal article" date="2002" name="Science">
        <title>Functional annotation of a full-length Arabidopsis cDNA collection.</title>
        <authorList>
            <person name="Seki M."/>
            <person name="Narusaka M."/>
            <person name="Kamiya A."/>
            <person name="Ishida J."/>
            <person name="Satou M."/>
            <person name="Sakurai T."/>
            <person name="Nakajima M."/>
            <person name="Enju A."/>
            <person name="Akiyama K."/>
            <person name="Oono Y."/>
            <person name="Muramatsu M."/>
            <person name="Hayashizaki Y."/>
            <person name="Kawai J."/>
            <person name="Carninci P."/>
            <person name="Itoh M."/>
            <person name="Ishii Y."/>
            <person name="Arakawa T."/>
            <person name="Shibata K."/>
            <person name="Shinagawa A."/>
            <person name="Shinozaki K."/>
        </authorList>
    </citation>
    <scope>NUCLEOTIDE SEQUENCE [LARGE SCALE MRNA]</scope>
    <source>
        <strain>cv. Columbia</strain>
    </source>
</reference>
<reference key="4">
    <citation type="journal article" date="2003" name="Science">
        <title>Empirical analysis of transcriptional activity in the Arabidopsis genome.</title>
        <authorList>
            <person name="Yamada K."/>
            <person name="Lim J."/>
            <person name="Dale J.M."/>
            <person name="Chen H."/>
            <person name="Shinn P."/>
            <person name="Palm C.J."/>
            <person name="Southwick A.M."/>
            <person name="Wu H.C."/>
            <person name="Kim C.J."/>
            <person name="Nguyen M."/>
            <person name="Pham P.K."/>
            <person name="Cheuk R.F."/>
            <person name="Karlin-Newmann G."/>
            <person name="Liu S.X."/>
            <person name="Lam B."/>
            <person name="Sakano H."/>
            <person name="Wu T."/>
            <person name="Yu G."/>
            <person name="Miranda M."/>
            <person name="Quach H.L."/>
            <person name="Tripp M."/>
            <person name="Chang C.H."/>
            <person name="Lee J.M."/>
            <person name="Toriumi M.J."/>
            <person name="Chan M.M."/>
            <person name="Tang C.C."/>
            <person name="Onodera C.S."/>
            <person name="Deng J.M."/>
            <person name="Akiyama K."/>
            <person name="Ansari Y."/>
            <person name="Arakawa T."/>
            <person name="Banh J."/>
            <person name="Banno F."/>
            <person name="Bowser L."/>
            <person name="Brooks S.Y."/>
            <person name="Carninci P."/>
            <person name="Chao Q."/>
            <person name="Choy N."/>
            <person name="Enju A."/>
            <person name="Goldsmith A.D."/>
            <person name="Gurjal M."/>
            <person name="Hansen N.F."/>
            <person name="Hayashizaki Y."/>
            <person name="Johnson-Hopson C."/>
            <person name="Hsuan V.W."/>
            <person name="Iida K."/>
            <person name="Karnes M."/>
            <person name="Khan S."/>
            <person name="Koesema E."/>
            <person name="Ishida J."/>
            <person name="Jiang P.X."/>
            <person name="Jones T."/>
            <person name="Kawai J."/>
            <person name="Kamiya A."/>
            <person name="Meyers C."/>
            <person name="Nakajima M."/>
            <person name="Narusaka M."/>
            <person name="Seki M."/>
            <person name="Sakurai T."/>
            <person name="Satou M."/>
            <person name="Tamse R."/>
            <person name="Vaysberg M."/>
            <person name="Wallender E.K."/>
            <person name="Wong C."/>
            <person name="Yamamura Y."/>
            <person name="Yuan S."/>
            <person name="Shinozaki K."/>
            <person name="Davis R.W."/>
            <person name="Theologis A."/>
            <person name="Ecker J.R."/>
        </authorList>
    </citation>
    <scope>NUCLEOTIDE SEQUENCE [LARGE SCALE MRNA]</scope>
    <source>
        <strain>cv. Columbia</strain>
    </source>
</reference>
<reference key="5">
    <citation type="journal article" date="2006" name="J. Biol. Chem.">
        <title>MUBS: a family of ubiquitin-fold proteins that are plasma membrane-anchored by prenylation.</title>
        <authorList>
            <person name="Downes B.P."/>
            <person name="Saracco S.A."/>
            <person name="Lee S.S."/>
            <person name="Crowell D.N."/>
            <person name="Vierstra R.D."/>
        </authorList>
    </citation>
    <scope>IDENTIFICATION</scope>
    <scope>NOMENCLATURE</scope>
    <scope>ISOPRENYLATION AT CYS-116</scope>
    <scope>METHYLATION AT CYS-116</scope>
    <scope>MUTAGENESIS OF CYS-116</scope>
    <scope>TISSUE SPECIFICITY</scope>
    <scope>INDUCTION</scope>
    <scope>SUBCELLULAR LOCATION</scope>
</reference>
<keyword id="KW-1003">Cell membrane</keyword>
<keyword id="KW-0449">Lipoprotein</keyword>
<keyword id="KW-0472">Membrane</keyword>
<keyword id="KW-0488">Methylation</keyword>
<keyword id="KW-0564">Palmitate</keyword>
<keyword id="KW-0636">Prenylation</keyword>
<keyword id="KW-1185">Reference proteome</keyword>
<protein>
    <recommendedName>
        <fullName>Membrane-anchored ubiquitin-fold protein 6</fullName>
        <shortName>AtMUB6</shortName>
        <shortName>Membrane-anchored ub-fold protein 6</shortName>
    </recommendedName>
</protein>
<feature type="chain" id="PRO_0000248171" description="Membrane-anchored ubiquitin-fold protein 6">
    <location>
        <begin position="1"/>
        <end position="116"/>
    </location>
</feature>
<feature type="propeptide" id="PRO_0000248172" description="Removed in mature form">
    <location>
        <begin position="117"/>
        <end position="119"/>
    </location>
</feature>
<feature type="domain" description="Ubiquitin-like" evidence="2">
    <location>
        <begin position="8"/>
        <end position="76"/>
    </location>
</feature>
<feature type="modified residue" description="Cysteine methyl ester" evidence="3">
    <location>
        <position position="116"/>
    </location>
</feature>
<feature type="lipid moiety-binding region" description="S-palmitoyl cysteine" evidence="1">
    <location>
        <position position="114"/>
    </location>
</feature>
<feature type="lipid moiety-binding region" description="S-geranylgeranyl cysteine" evidence="3">
    <location>
        <position position="116"/>
    </location>
</feature>
<feature type="mutagenesis site" description="Loss of prenylation and membrane localization." evidence="3">
    <original>C</original>
    <variation>S</variation>
    <location>
        <position position="116"/>
    </location>
</feature>
<name>MUB6_ARATH</name>